<name>TRMD_ALCBS</name>
<sequence length="265" mass="29160">MMTTKPTFAVTLVTLFPEMAQAITGFGVTRRAVDNGQLQVETVNPRDFTEDRHRTVDDRPFGGGPGMVMKVEPLAKALQAARVANPAAKVIYLSPQGQPLTQAKATALAEQPGLILLAGRYEGVDERLLDAEVDEQISIGDYVLSGGELPALVLIDAVSRLIPGVLGHQDSAEQDSFSGEFENLLDCPHYTRPEVYGEQAVPPVLLSGNHELIRRWRLKQALGRTWQQRPDLLEARRARGLSKEEQQLLDEYIAEQPSHTAKTTD</sequence>
<reference key="1">
    <citation type="journal article" date="2006" name="Nat. Biotechnol.">
        <title>Genome sequence of the ubiquitous hydrocarbon-degrading marine bacterium Alcanivorax borkumensis.</title>
        <authorList>
            <person name="Schneiker S."/>
            <person name="Martins dos Santos V.A.P."/>
            <person name="Bartels D."/>
            <person name="Bekel T."/>
            <person name="Brecht M."/>
            <person name="Buhrmester J."/>
            <person name="Chernikova T.N."/>
            <person name="Denaro R."/>
            <person name="Ferrer M."/>
            <person name="Gertler C."/>
            <person name="Goesmann A."/>
            <person name="Golyshina O.V."/>
            <person name="Kaminski F."/>
            <person name="Khachane A.N."/>
            <person name="Lang S."/>
            <person name="Linke B."/>
            <person name="McHardy A.C."/>
            <person name="Meyer F."/>
            <person name="Nechitaylo T."/>
            <person name="Puehler A."/>
            <person name="Regenhardt D."/>
            <person name="Rupp O."/>
            <person name="Sabirova J.S."/>
            <person name="Selbitschka W."/>
            <person name="Yakimov M.M."/>
            <person name="Timmis K.N."/>
            <person name="Vorhoelter F.-J."/>
            <person name="Weidner S."/>
            <person name="Kaiser O."/>
            <person name="Golyshin P.N."/>
        </authorList>
    </citation>
    <scope>NUCLEOTIDE SEQUENCE [LARGE SCALE GENOMIC DNA]</scope>
    <source>
        <strain>ATCC 700651 / DSM 11573 / NCIMB 13689 / SK2</strain>
    </source>
</reference>
<evidence type="ECO:0000255" key="1">
    <source>
        <dbReference type="HAMAP-Rule" id="MF_00605"/>
    </source>
</evidence>
<keyword id="KW-0963">Cytoplasm</keyword>
<keyword id="KW-0489">Methyltransferase</keyword>
<keyword id="KW-1185">Reference proteome</keyword>
<keyword id="KW-0949">S-adenosyl-L-methionine</keyword>
<keyword id="KW-0808">Transferase</keyword>
<keyword id="KW-0819">tRNA processing</keyword>
<proteinExistence type="inferred from homology"/>
<accession>Q0VRF0</accession>
<gene>
    <name evidence="1" type="primary">trmD</name>
    <name type="ordered locus">ABO_0800</name>
</gene>
<feature type="chain" id="PRO_0000257386" description="tRNA (guanine-N(1)-)-methyltransferase">
    <location>
        <begin position="1"/>
        <end position="265"/>
    </location>
</feature>
<feature type="binding site" evidence="1">
    <location>
        <position position="119"/>
    </location>
    <ligand>
        <name>S-adenosyl-L-methionine</name>
        <dbReference type="ChEBI" id="CHEBI:59789"/>
    </ligand>
</feature>
<feature type="binding site" evidence="1">
    <location>
        <begin position="139"/>
        <end position="144"/>
    </location>
    <ligand>
        <name>S-adenosyl-L-methionine</name>
        <dbReference type="ChEBI" id="CHEBI:59789"/>
    </ligand>
</feature>
<protein>
    <recommendedName>
        <fullName evidence="1">tRNA (guanine-N(1)-)-methyltransferase</fullName>
        <ecNumber evidence="1">2.1.1.228</ecNumber>
    </recommendedName>
    <alternativeName>
        <fullName evidence="1">M1G-methyltransferase</fullName>
    </alternativeName>
    <alternativeName>
        <fullName evidence="1">tRNA [GM37] methyltransferase</fullName>
    </alternativeName>
</protein>
<organism>
    <name type="scientific">Alcanivorax borkumensis (strain ATCC 700651 / DSM 11573 / NCIMB 13689 / SK2)</name>
    <dbReference type="NCBI Taxonomy" id="393595"/>
    <lineage>
        <taxon>Bacteria</taxon>
        <taxon>Pseudomonadati</taxon>
        <taxon>Pseudomonadota</taxon>
        <taxon>Gammaproteobacteria</taxon>
        <taxon>Oceanospirillales</taxon>
        <taxon>Alcanivoracaceae</taxon>
        <taxon>Alcanivorax</taxon>
    </lineage>
</organism>
<dbReference type="EC" id="2.1.1.228" evidence="1"/>
<dbReference type="EMBL" id="AM286690">
    <property type="protein sequence ID" value="CAL16248.1"/>
    <property type="molecule type" value="Genomic_DNA"/>
</dbReference>
<dbReference type="RefSeq" id="WP_011588084.1">
    <property type="nucleotide sequence ID" value="NC_008260.1"/>
</dbReference>
<dbReference type="SMR" id="Q0VRF0"/>
<dbReference type="STRING" id="393595.ABO_0800"/>
<dbReference type="KEGG" id="abo:ABO_0800"/>
<dbReference type="eggNOG" id="COG0336">
    <property type="taxonomic scope" value="Bacteria"/>
</dbReference>
<dbReference type="HOGENOM" id="CLU_047363_0_2_6"/>
<dbReference type="OrthoDB" id="9807416at2"/>
<dbReference type="Proteomes" id="UP000008871">
    <property type="component" value="Chromosome"/>
</dbReference>
<dbReference type="GO" id="GO:0005829">
    <property type="term" value="C:cytosol"/>
    <property type="evidence" value="ECO:0007669"/>
    <property type="project" value="TreeGrafter"/>
</dbReference>
<dbReference type="GO" id="GO:0052906">
    <property type="term" value="F:tRNA (guanine(37)-N1)-methyltransferase activity"/>
    <property type="evidence" value="ECO:0007669"/>
    <property type="project" value="UniProtKB-UniRule"/>
</dbReference>
<dbReference type="GO" id="GO:0002939">
    <property type="term" value="P:tRNA N1-guanine methylation"/>
    <property type="evidence" value="ECO:0007669"/>
    <property type="project" value="TreeGrafter"/>
</dbReference>
<dbReference type="CDD" id="cd18080">
    <property type="entry name" value="TrmD-like"/>
    <property type="match status" value="1"/>
</dbReference>
<dbReference type="FunFam" id="1.10.1270.20:FF:000001">
    <property type="entry name" value="tRNA (guanine-N(1)-)-methyltransferase"/>
    <property type="match status" value="1"/>
</dbReference>
<dbReference type="FunFam" id="3.40.1280.10:FF:000001">
    <property type="entry name" value="tRNA (guanine-N(1)-)-methyltransferase"/>
    <property type="match status" value="1"/>
</dbReference>
<dbReference type="Gene3D" id="3.40.1280.10">
    <property type="match status" value="1"/>
</dbReference>
<dbReference type="Gene3D" id="1.10.1270.20">
    <property type="entry name" value="tRNA(m1g37)methyltransferase, domain 2"/>
    <property type="match status" value="1"/>
</dbReference>
<dbReference type="HAMAP" id="MF_00605">
    <property type="entry name" value="TrmD"/>
    <property type="match status" value="1"/>
</dbReference>
<dbReference type="InterPro" id="IPR029028">
    <property type="entry name" value="Alpha/beta_knot_MTases"/>
</dbReference>
<dbReference type="InterPro" id="IPR023148">
    <property type="entry name" value="tRNA_m1G_MeTrfase_C_sf"/>
</dbReference>
<dbReference type="InterPro" id="IPR002649">
    <property type="entry name" value="tRNA_m1G_MeTrfase_TrmD"/>
</dbReference>
<dbReference type="InterPro" id="IPR029026">
    <property type="entry name" value="tRNA_m1G_MTases_N"/>
</dbReference>
<dbReference type="InterPro" id="IPR016009">
    <property type="entry name" value="tRNA_MeTrfase_TRMD/TRM10"/>
</dbReference>
<dbReference type="NCBIfam" id="NF000648">
    <property type="entry name" value="PRK00026.1"/>
    <property type="match status" value="1"/>
</dbReference>
<dbReference type="NCBIfam" id="TIGR00088">
    <property type="entry name" value="trmD"/>
    <property type="match status" value="1"/>
</dbReference>
<dbReference type="PANTHER" id="PTHR46417">
    <property type="entry name" value="TRNA (GUANINE-N(1)-)-METHYLTRANSFERASE"/>
    <property type="match status" value="1"/>
</dbReference>
<dbReference type="PANTHER" id="PTHR46417:SF1">
    <property type="entry name" value="TRNA (GUANINE-N(1)-)-METHYLTRANSFERASE"/>
    <property type="match status" value="1"/>
</dbReference>
<dbReference type="Pfam" id="PF01746">
    <property type="entry name" value="tRNA_m1G_MT"/>
    <property type="match status" value="1"/>
</dbReference>
<dbReference type="PIRSF" id="PIRSF000386">
    <property type="entry name" value="tRNA_mtase"/>
    <property type="match status" value="1"/>
</dbReference>
<dbReference type="SUPFAM" id="SSF75217">
    <property type="entry name" value="alpha/beta knot"/>
    <property type="match status" value="1"/>
</dbReference>
<comment type="function">
    <text evidence="1">Specifically methylates guanosine-37 in various tRNAs.</text>
</comment>
<comment type="catalytic activity">
    <reaction evidence="1">
        <text>guanosine(37) in tRNA + S-adenosyl-L-methionine = N(1)-methylguanosine(37) in tRNA + S-adenosyl-L-homocysteine + H(+)</text>
        <dbReference type="Rhea" id="RHEA:36899"/>
        <dbReference type="Rhea" id="RHEA-COMP:10145"/>
        <dbReference type="Rhea" id="RHEA-COMP:10147"/>
        <dbReference type="ChEBI" id="CHEBI:15378"/>
        <dbReference type="ChEBI" id="CHEBI:57856"/>
        <dbReference type="ChEBI" id="CHEBI:59789"/>
        <dbReference type="ChEBI" id="CHEBI:73542"/>
        <dbReference type="ChEBI" id="CHEBI:74269"/>
        <dbReference type="EC" id="2.1.1.228"/>
    </reaction>
</comment>
<comment type="subunit">
    <text evidence="1">Homodimer.</text>
</comment>
<comment type="subcellular location">
    <subcellularLocation>
        <location evidence="1">Cytoplasm</location>
    </subcellularLocation>
</comment>
<comment type="similarity">
    <text evidence="1">Belongs to the RNA methyltransferase TrmD family.</text>
</comment>